<keyword id="KW-0040">ANK repeat</keyword>
<keyword id="KW-0156">Chromatin regulator</keyword>
<keyword id="KW-0158">Chromosome</keyword>
<keyword id="KW-0227">DNA damage</keyword>
<keyword id="KW-0234">DNA repair</keyword>
<keyword id="KW-0433">Leucine-rich repeat</keyword>
<keyword id="KW-0539">Nucleus</keyword>
<keyword id="KW-0597">Phosphoprotein</keyword>
<keyword id="KW-1185">Reference proteome</keyword>
<keyword id="KW-0677">Repeat</keyword>
<keyword id="KW-0802">TPR repeat</keyword>
<feature type="chain" id="PRO_0000403776" description="Tonsoku-like protein">
    <location>
        <begin position="1"/>
        <end position="1405"/>
    </location>
</feature>
<feature type="repeat" description="TPR 1">
    <location>
        <begin position="23"/>
        <end position="56"/>
    </location>
</feature>
<feature type="repeat" description="TPR 2">
    <location>
        <begin position="63"/>
        <end position="96"/>
    </location>
</feature>
<feature type="repeat" description="LRR 1">
    <location>
        <begin position="153"/>
        <end position="181"/>
    </location>
</feature>
<feature type="repeat" description="TPR 3">
    <location>
        <begin position="163"/>
        <end position="196"/>
    </location>
</feature>
<feature type="repeat" description="TPR 4">
    <location>
        <begin position="203"/>
        <end position="237"/>
    </location>
</feature>
<feature type="repeat" description="TPR 5">
    <location>
        <begin position="245"/>
        <end position="278"/>
    </location>
</feature>
<feature type="repeat" description="TPR 6">
    <location>
        <begin position="314"/>
        <end position="347"/>
    </location>
</feature>
<feature type="repeat" description="TPR 7">
    <location>
        <begin position="355"/>
        <end position="388"/>
    </location>
</feature>
<feature type="repeat" description="LRR 2">
    <location>
        <begin position="439"/>
        <end position="465"/>
    </location>
</feature>
<feature type="repeat" description="ANK 1">
    <location>
        <begin position="538"/>
        <end position="567"/>
    </location>
</feature>
<feature type="repeat" description="ANK 2">
    <location>
        <begin position="571"/>
        <end position="600"/>
    </location>
</feature>
<feature type="repeat" description="ANK 3">
    <location>
        <begin position="609"/>
        <end position="638"/>
    </location>
</feature>
<feature type="repeat" description="LRR 3">
    <location>
        <begin position="1085"/>
        <end position="1108"/>
    </location>
</feature>
<feature type="repeat" description="LRR 4">
    <location>
        <begin position="1113"/>
        <end position="1137"/>
    </location>
</feature>
<feature type="repeat" description="LRR 5">
    <location>
        <begin position="1143"/>
        <end position="1166"/>
    </location>
</feature>
<feature type="repeat" description="LRR 6">
    <location>
        <begin position="1186"/>
        <end position="1211"/>
    </location>
</feature>
<feature type="repeat" description="LRR 7">
    <location>
        <begin position="1287"/>
        <end position="1311"/>
    </location>
</feature>
<feature type="repeat" description="LRR 8">
    <location>
        <begin position="1333"/>
        <end position="1357"/>
    </location>
</feature>
<feature type="region of interest" description="Disordered" evidence="2">
    <location>
        <begin position="465"/>
        <end position="535"/>
    </location>
</feature>
<feature type="region of interest" description="Disordered" evidence="2">
    <location>
        <begin position="695"/>
        <end position="753"/>
    </location>
</feature>
<feature type="region of interest" description="Disordered" evidence="2">
    <location>
        <begin position="806"/>
        <end position="827"/>
    </location>
</feature>
<feature type="region of interest" description="Disordered" evidence="2">
    <location>
        <begin position="841"/>
        <end position="880"/>
    </location>
</feature>
<feature type="compositionally biased region" description="Acidic residues" evidence="2">
    <location>
        <begin position="469"/>
        <end position="483"/>
    </location>
</feature>
<feature type="compositionally biased region" description="Basic and acidic residues" evidence="2">
    <location>
        <begin position="813"/>
        <end position="822"/>
    </location>
</feature>
<feature type="compositionally biased region" description="Polar residues" evidence="2">
    <location>
        <begin position="841"/>
        <end position="850"/>
    </location>
</feature>
<feature type="compositionally biased region" description="Low complexity" evidence="2">
    <location>
        <begin position="859"/>
        <end position="874"/>
    </location>
</feature>
<feature type="modified residue" description="Phosphoserine" evidence="3">
    <location>
        <position position="707"/>
    </location>
</feature>
<feature type="modified residue" description="Phosphoserine" evidence="3">
    <location>
        <position position="709"/>
    </location>
</feature>
<feature type="modified residue" description="Phosphoserine" evidence="3">
    <location>
        <position position="893"/>
    </location>
</feature>
<feature type="modified residue" description="Phosphoserine" evidence="3">
    <location>
        <position position="895"/>
    </location>
</feature>
<feature type="modified residue" description="Phosphoserine" evidence="3">
    <location>
        <position position="899"/>
    </location>
</feature>
<feature type="modified residue" description="Phosphoserine" evidence="3">
    <location>
        <position position="902"/>
    </location>
</feature>
<feature type="sequence conflict" description="In Ref. 3; AAM48411." evidence="4" ref="3">
    <original>K</original>
    <variation>R</variation>
    <location>
        <position position="535"/>
    </location>
</feature>
<feature type="sequence conflict" description="In Ref. 3; AAM48411." evidence="4" ref="3">
    <original>R</original>
    <variation>H</variation>
    <location>
        <position position="983"/>
    </location>
</feature>
<reference key="1">
    <citation type="journal article" date="2000" name="Science">
        <title>The genome sequence of Drosophila melanogaster.</title>
        <authorList>
            <person name="Adams M.D."/>
            <person name="Celniker S.E."/>
            <person name="Holt R.A."/>
            <person name="Evans C.A."/>
            <person name="Gocayne J.D."/>
            <person name="Amanatides P.G."/>
            <person name="Scherer S.E."/>
            <person name="Li P.W."/>
            <person name="Hoskins R.A."/>
            <person name="Galle R.F."/>
            <person name="George R.A."/>
            <person name="Lewis S.E."/>
            <person name="Richards S."/>
            <person name="Ashburner M."/>
            <person name="Henderson S.N."/>
            <person name="Sutton G.G."/>
            <person name="Wortman J.R."/>
            <person name="Yandell M.D."/>
            <person name="Zhang Q."/>
            <person name="Chen L.X."/>
            <person name="Brandon R.C."/>
            <person name="Rogers Y.-H.C."/>
            <person name="Blazej R.G."/>
            <person name="Champe M."/>
            <person name="Pfeiffer B.D."/>
            <person name="Wan K.H."/>
            <person name="Doyle C."/>
            <person name="Baxter E.G."/>
            <person name="Helt G."/>
            <person name="Nelson C.R."/>
            <person name="Miklos G.L.G."/>
            <person name="Abril J.F."/>
            <person name="Agbayani A."/>
            <person name="An H.-J."/>
            <person name="Andrews-Pfannkoch C."/>
            <person name="Baldwin D."/>
            <person name="Ballew R.M."/>
            <person name="Basu A."/>
            <person name="Baxendale J."/>
            <person name="Bayraktaroglu L."/>
            <person name="Beasley E.M."/>
            <person name="Beeson K.Y."/>
            <person name="Benos P.V."/>
            <person name="Berman B.P."/>
            <person name="Bhandari D."/>
            <person name="Bolshakov S."/>
            <person name="Borkova D."/>
            <person name="Botchan M.R."/>
            <person name="Bouck J."/>
            <person name="Brokstein P."/>
            <person name="Brottier P."/>
            <person name="Burtis K.C."/>
            <person name="Busam D.A."/>
            <person name="Butler H."/>
            <person name="Cadieu E."/>
            <person name="Center A."/>
            <person name="Chandra I."/>
            <person name="Cherry J.M."/>
            <person name="Cawley S."/>
            <person name="Dahlke C."/>
            <person name="Davenport L.B."/>
            <person name="Davies P."/>
            <person name="de Pablos B."/>
            <person name="Delcher A."/>
            <person name="Deng Z."/>
            <person name="Mays A.D."/>
            <person name="Dew I."/>
            <person name="Dietz S.M."/>
            <person name="Dodson K."/>
            <person name="Doup L.E."/>
            <person name="Downes M."/>
            <person name="Dugan-Rocha S."/>
            <person name="Dunkov B.C."/>
            <person name="Dunn P."/>
            <person name="Durbin K.J."/>
            <person name="Evangelista C.C."/>
            <person name="Ferraz C."/>
            <person name="Ferriera S."/>
            <person name="Fleischmann W."/>
            <person name="Fosler C."/>
            <person name="Gabrielian A.E."/>
            <person name="Garg N.S."/>
            <person name="Gelbart W.M."/>
            <person name="Glasser K."/>
            <person name="Glodek A."/>
            <person name="Gong F."/>
            <person name="Gorrell J.H."/>
            <person name="Gu Z."/>
            <person name="Guan P."/>
            <person name="Harris M."/>
            <person name="Harris N.L."/>
            <person name="Harvey D.A."/>
            <person name="Heiman T.J."/>
            <person name="Hernandez J.R."/>
            <person name="Houck J."/>
            <person name="Hostin D."/>
            <person name="Houston K.A."/>
            <person name="Howland T.J."/>
            <person name="Wei M.-H."/>
            <person name="Ibegwam C."/>
            <person name="Jalali M."/>
            <person name="Kalush F."/>
            <person name="Karpen G.H."/>
            <person name="Ke Z."/>
            <person name="Kennison J.A."/>
            <person name="Ketchum K.A."/>
            <person name="Kimmel B.E."/>
            <person name="Kodira C.D."/>
            <person name="Kraft C.L."/>
            <person name="Kravitz S."/>
            <person name="Kulp D."/>
            <person name="Lai Z."/>
            <person name="Lasko P."/>
            <person name="Lei Y."/>
            <person name="Levitsky A.A."/>
            <person name="Li J.H."/>
            <person name="Li Z."/>
            <person name="Liang Y."/>
            <person name="Lin X."/>
            <person name="Liu X."/>
            <person name="Mattei B."/>
            <person name="McIntosh T.C."/>
            <person name="McLeod M.P."/>
            <person name="McPherson D."/>
            <person name="Merkulov G."/>
            <person name="Milshina N.V."/>
            <person name="Mobarry C."/>
            <person name="Morris J."/>
            <person name="Moshrefi A."/>
            <person name="Mount S.M."/>
            <person name="Moy M."/>
            <person name="Murphy B."/>
            <person name="Murphy L."/>
            <person name="Muzny D.M."/>
            <person name="Nelson D.L."/>
            <person name="Nelson D.R."/>
            <person name="Nelson K.A."/>
            <person name="Nixon K."/>
            <person name="Nusskern D.R."/>
            <person name="Pacleb J.M."/>
            <person name="Palazzolo M."/>
            <person name="Pittman G.S."/>
            <person name="Pan S."/>
            <person name="Pollard J."/>
            <person name="Puri V."/>
            <person name="Reese M.G."/>
            <person name="Reinert K."/>
            <person name="Remington K."/>
            <person name="Saunders R.D.C."/>
            <person name="Scheeler F."/>
            <person name="Shen H."/>
            <person name="Shue B.C."/>
            <person name="Siden-Kiamos I."/>
            <person name="Simpson M."/>
            <person name="Skupski M.P."/>
            <person name="Smith T.J."/>
            <person name="Spier E."/>
            <person name="Spradling A.C."/>
            <person name="Stapleton M."/>
            <person name="Strong R."/>
            <person name="Sun E."/>
            <person name="Svirskas R."/>
            <person name="Tector C."/>
            <person name="Turner R."/>
            <person name="Venter E."/>
            <person name="Wang A.H."/>
            <person name="Wang X."/>
            <person name="Wang Z.-Y."/>
            <person name="Wassarman D.A."/>
            <person name="Weinstock G.M."/>
            <person name="Weissenbach J."/>
            <person name="Williams S.M."/>
            <person name="Woodage T."/>
            <person name="Worley K.C."/>
            <person name="Wu D."/>
            <person name="Yang S."/>
            <person name="Yao Q.A."/>
            <person name="Ye J."/>
            <person name="Yeh R.-F."/>
            <person name="Zaveri J.S."/>
            <person name="Zhan M."/>
            <person name="Zhang G."/>
            <person name="Zhao Q."/>
            <person name="Zheng L."/>
            <person name="Zheng X.H."/>
            <person name="Zhong F.N."/>
            <person name="Zhong W."/>
            <person name="Zhou X."/>
            <person name="Zhu S.C."/>
            <person name="Zhu X."/>
            <person name="Smith H.O."/>
            <person name="Gibbs R.A."/>
            <person name="Myers E.W."/>
            <person name="Rubin G.M."/>
            <person name="Venter J.C."/>
        </authorList>
    </citation>
    <scope>NUCLEOTIDE SEQUENCE [LARGE SCALE GENOMIC DNA]</scope>
    <source>
        <strain>Berkeley</strain>
    </source>
</reference>
<reference key="2">
    <citation type="journal article" date="2002" name="Genome Biol.">
        <title>Annotation of the Drosophila melanogaster euchromatic genome: a systematic review.</title>
        <authorList>
            <person name="Misra S."/>
            <person name="Crosby M.A."/>
            <person name="Mungall C.J."/>
            <person name="Matthews B.B."/>
            <person name="Campbell K.S."/>
            <person name="Hradecky P."/>
            <person name="Huang Y."/>
            <person name="Kaminker J.S."/>
            <person name="Millburn G.H."/>
            <person name="Prochnik S.E."/>
            <person name="Smith C.D."/>
            <person name="Tupy J.L."/>
            <person name="Whitfield E.J."/>
            <person name="Bayraktaroglu L."/>
            <person name="Berman B.P."/>
            <person name="Bettencourt B.R."/>
            <person name="Celniker S.E."/>
            <person name="de Grey A.D.N.J."/>
            <person name="Drysdale R.A."/>
            <person name="Harris N.L."/>
            <person name="Richter J."/>
            <person name="Russo S."/>
            <person name="Schroeder A.J."/>
            <person name="Shu S.Q."/>
            <person name="Stapleton M."/>
            <person name="Yamada C."/>
            <person name="Ashburner M."/>
            <person name="Gelbart W.M."/>
            <person name="Rubin G.M."/>
            <person name="Lewis S.E."/>
        </authorList>
    </citation>
    <scope>GENOME REANNOTATION</scope>
    <source>
        <strain>Berkeley</strain>
    </source>
</reference>
<reference key="3">
    <citation type="journal article" date="2002" name="Genome Biol.">
        <title>A Drosophila full-length cDNA resource.</title>
        <authorList>
            <person name="Stapleton M."/>
            <person name="Carlson J.W."/>
            <person name="Brokstein P."/>
            <person name="Yu C."/>
            <person name="Champe M."/>
            <person name="George R.A."/>
            <person name="Guarin H."/>
            <person name="Kronmiller B."/>
            <person name="Pacleb J.M."/>
            <person name="Park S."/>
            <person name="Wan K.H."/>
            <person name="Rubin G.M."/>
            <person name="Celniker S.E."/>
        </authorList>
    </citation>
    <scope>NUCLEOTIDE SEQUENCE [LARGE SCALE MRNA]</scope>
    <source>
        <strain>Berkeley</strain>
        <tissue>Embryo</tissue>
    </source>
</reference>
<reference key="4">
    <citation type="journal article" date="2008" name="J. Proteome Res.">
        <title>Phosphoproteome analysis of Drosophila melanogaster embryos.</title>
        <authorList>
            <person name="Zhai B."/>
            <person name="Villen J."/>
            <person name="Beausoleil S.A."/>
            <person name="Mintseris J."/>
            <person name="Gygi S.P."/>
        </authorList>
    </citation>
    <scope>PHOSPHORYLATION [LARGE SCALE ANALYSIS] AT SER-707; SER-709; SER-893; SER-895; SER-899 AND SER-902</scope>
    <scope>IDENTIFICATION BY MASS SPECTROMETRY</scope>
    <source>
        <tissue>Embryo</tissue>
    </source>
</reference>
<gene>
    <name type="ORF">CG7457</name>
</gene>
<evidence type="ECO:0000250" key="1">
    <source>
        <dbReference type="UniProtKB" id="Q96HA7"/>
    </source>
</evidence>
<evidence type="ECO:0000256" key="2">
    <source>
        <dbReference type="SAM" id="MobiDB-lite"/>
    </source>
</evidence>
<evidence type="ECO:0000269" key="3">
    <source>
    </source>
</evidence>
<evidence type="ECO:0000305" key="4"/>
<name>TONSL_DROME</name>
<protein>
    <recommendedName>
        <fullName>Tonsoku-like protein</fullName>
    </recommendedName>
</protein>
<organism>
    <name type="scientific">Drosophila melanogaster</name>
    <name type="common">Fruit fly</name>
    <dbReference type="NCBI Taxonomy" id="7227"/>
    <lineage>
        <taxon>Eukaryota</taxon>
        <taxon>Metazoa</taxon>
        <taxon>Ecdysozoa</taxon>
        <taxon>Arthropoda</taxon>
        <taxon>Hexapoda</taxon>
        <taxon>Insecta</taxon>
        <taxon>Pterygota</taxon>
        <taxon>Neoptera</taxon>
        <taxon>Endopterygota</taxon>
        <taxon>Diptera</taxon>
        <taxon>Brachycera</taxon>
        <taxon>Muscomorpha</taxon>
        <taxon>Ephydroidea</taxon>
        <taxon>Drosophilidae</taxon>
        <taxon>Drosophila</taxon>
        <taxon>Sophophora</taxon>
    </lineage>
</organism>
<sequence>MEEKRYLKRKEKARSDGNRDQVAVSCNQLGDFYNQQGKYTDAVREYVQEAQIYASMGKELETAKAKRMVGEMYTLLCDYDAAKDHINDYLKIAKRLKNQVEEQRAYATLGRVHLLHGQSLADSSASGSMEQLKLAEKNFLRSLLLIKDLSGQISKLEQLDMQARCYLNIGVVKEHMEAFQESIEYIDKAIKISKTHELWDLTHLCYISMSLLYICKKNDATAALRFCNMALEVAKRFPNKVKKICETLITKAEILIKAGDFASAKQILTKAYKKNTPDENDRVNIEKQLRIVVKVCQTLDELVLTSSVDYAKLKGLYEKLGDGCCHLMNYEKALTYYQKMLENAELNQESGKSLVPIYVSLYQTYRDNGQFDKALEYLWKEFELNQDAPSEAFTTLCTIAEICEQQSHPFWTVHDVYQKALRQADKAGSCSDKLVKIAMVRLRRLMLKHNMQVLVENLEADATAKGIDLDQEESVGDDEEESDGGGTAVQQNTPDWDDDFDLATLTDSDASDLDETEKPRPQRTTRGNRTLVIKKNNKGETQLHQACISGNLELVRRLIDQGHTVNVRDHAGWLPLHEACNHGYREIVELLLDKGAASAINDKGGTSCDGITPLFDACSNGFLDVAELLLDRGADATVRTDYNETCIAGLDKWRQGAQLVDGEQAQYAQLRERLLRTLSKVGICSDKNARPLTNFNAKRISREERGSMSEEEDEEEALHESNRRSLSHNRSGSEYGAKKSKSSTQPSASKEYRSVMAHLKRPNRLNDDPPSTSTLNKHKRNAFLSEDEVDADNWLIDDVGPERKRKRINSGDLSRRTSKENFQDTALSLPANWEDDLLQATPENEYSQRQKQMRKLTLSRSSSMSSNHSSSATSSRKKHQATLLDSGFSRFRSESPLGSESSQDGTTSLISVRTIEPDSTTSTIQVLISPAKSSPIKVQATPVLATTVSFKVKIQDELLLVPIERKKLQDINIRWLAEEAGRRYNKLTGLTPLLRLKTADGFAYEETDPVSVALEQNMLMASILDWKISPLSQRYEEMCLQMQKTVDNKVKLLLERSQNNNMLELSGLWMRAEKTEPIFKALLHQARLTVLDLSCNFIGNEGCQQLAKSLPTLLQLKALRLQCNAIGSHGLEALLCGQGMDKLELLEELNLNQNPLGNASVRILSKYCASPAGQALTCLQLAQCELTELQDFDLGFNKLTRFDISFNQLTQQSVRRLTDQLNSCRLEQLNLSYVRWPLDDASGFALSERLVTLFEGGTCERFVGVQLAGCGLNDAHMYNISQHLAKAKQLQMLDISDNSNLSGTTLGYILDELPQLRDLLAVNCTNLLDDIRLQKLEQLKQLPRRLELTVDEQVFSMPGALETLQSIWQLQFGDKAKMLTTSNSRKIGRRYKGLLKLLADGSDAE</sequence>
<accession>Q9VSA4</accession>
<accession>Q8MT49</accession>
<comment type="function">
    <text evidence="1">Histone reader involved in homologous recombination-mediated repair of double-strand breaks (DSBs) at stalled or collapsed replication forks. Specifically recognizes and binds histone H3.1.</text>
</comment>
<comment type="subcellular location">
    <subcellularLocation>
        <location evidence="1">Nucleus</location>
        <location evidence="1">Nucleoplasm</location>
    </subcellularLocation>
    <subcellularLocation>
        <location evidence="1">Chromosome</location>
    </subcellularLocation>
</comment>
<comment type="similarity">
    <text evidence="4">Belongs to the Tonsoku family.</text>
</comment>
<dbReference type="EMBL" id="AE014296">
    <property type="protein sequence ID" value="AAF50523.1"/>
    <property type="molecule type" value="Genomic_DNA"/>
</dbReference>
<dbReference type="EMBL" id="AY118382">
    <property type="protein sequence ID" value="AAM48411.1"/>
    <property type="molecule type" value="mRNA"/>
</dbReference>
<dbReference type="RefSeq" id="NP_001303376.1">
    <property type="nucleotide sequence ID" value="NM_001316447.1"/>
</dbReference>
<dbReference type="RefSeq" id="NP_648150.1">
    <property type="nucleotide sequence ID" value="NM_139893.4"/>
</dbReference>
<dbReference type="SMR" id="Q9VSA4"/>
<dbReference type="BioGRID" id="64296">
    <property type="interactions" value="3"/>
</dbReference>
<dbReference type="FunCoup" id="Q9VSA4">
    <property type="interactions" value="366"/>
</dbReference>
<dbReference type="IntAct" id="Q9VSA4">
    <property type="interactions" value="6"/>
</dbReference>
<dbReference type="STRING" id="7227.FBpp0312411"/>
<dbReference type="iPTMnet" id="Q9VSA4"/>
<dbReference type="PaxDb" id="7227-FBpp0076526"/>
<dbReference type="EnsemblMetazoa" id="FBtr0076814">
    <property type="protein sequence ID" value="FBpp0076526"/>
    <property type="gene ID" value="FBgn0035812"/>
</dbReference>
<dbReference type="EnsemblMetazoa" id="FBtr0346912">
    <property type="protein sequence ID" value="FBpp0312411"/>
    <property type="gene ID" value="FBgn0035812"/>
</dbReference>
<dbReference type="GeneID" id="38865"/>
<dbReference type="KEGG" id="dme:Dmel_CG7457"/>
<dbReference type="UCSC" id="CG7457-RA">
    <property type="organism name" value="d. melanogaster"/>
</dbReference>
<dbReference type="AGR" id="FB:FBgn0035812"/>
<dbReference type="FlyBase" id="FBgn0035812">
    <property type="gene designation" value="CG7457"/>
</dbReference>
<dbReference type="VEuPathDB" id="VectorBase:FBgn0035812"/>
<dbReference type="eggNOG" id="KOG0504">
    <property type="taxonomic scope" value="Eukaryota"/>
</dbReference>
<dbReference type="HOGENOM" id="CLU_002128_0_0_1"/>
<dbReference type="InParanoid" id="Q9VSA4"/>
<dbReference type="OMA" id="ITQHLAK"/>
<dbReference type="OrthoDB" id="273147at2759"/>
<dbReference type="PhylomeDB" id="Q9VSA4"/>
<dbReference type="BioGRID-ORCS" id="38865">
    <property type="hits" value="0 hits in 1 CRISPR screen"/>
</dbReference>
<dbReference type="GenomeRNAi" id="38865"/>
<dbReference type="PRO" id="PR:Q9VSA4"/>
<dbReference type="Proteomes" id="UP000000803">
    <property type="component" value="Chromosome 3L"/>
</dbReference>
<dbReference type="Bgee" id="FBgn0035812">
    <property type="expression patterns" value="Expressed in fat body cell in body wall and 119 other cell types or tissues"/>
</dbReference>
<dbReference type="ExpressionAtlas" id="Q9VSA4">
    <property type="expression patterns" value="baseline and differential"/>
</dbReference>
<dbReference type="GO" id="GO:0043596">
    <property type="term" value="C:nuclear replication fork"/>
    <property type="evidence" value="ECO:0000250"/>
    <property type="project" value="FlyBase"/>
</dbReference>
<dbReference type="GO" id="GO:0005654">
    <property type="term" value="C:nucleoplasm"/>
    <property type="evidence" value="ECO:0007669"/>
    <property type="project" value="UniProtKB-SubCell"/>
</dbReference>
<dbReference type="GO" id="GO:0042393">
    <property type="term" value="F:histone binding"/>
    <property type="evidence" value="ECO:0000250"/>
    <property type="project" value="FlyBase"/>
</dbReference>
<dbReference type="GO" id="GO:0006325">
    <property type="term" value="P:chromatin organization"/>
    <property type="evidence" value="ECO:0007669"/>
    <property type="project" value="UniProtKB-KW"/>
</dbReference>
<dbReference type="GO" id="GO:0000724">
    <property type="term" value="P:double-strand break repair via homologous recombination"/>
    <property type="evidence" value="ECO:0000250"/>
    <property type="project" value="FlyBase"/>
</dbReference>
<dbReference type="GO" id="GO:0031297">
    <property type="term" value="P:replication fork processing"/>
    <property type="evidence" value="ECO:0000250"/>
    <property type="project" value="FlyBase"/>
</dbReference>
<dbReference type="Gene3D" id="1.25.40.20">
    <property type="entry name" value="Ankyrin repeat-containing domain"/>
    <property type="match status" value="1"/>
</dbReference>
<dbReference type="Gene3D" id="3.80.10.10">
    <property type="entry name" value="Ribonuclease Inhibitor"/>
    <property type="match status" value="2"/>
</dbReference>
<dbReference type="Gene3D" id="1.25.40.10">
    <property type="entry name" value="Tetratricopeptide repeat domain"/>
    <property type="match status" value="3"/>
</dbReference>
<dbReference type="InterPro" id="IPR002110">
    <property type="entry name" value="Ankyrin_rpt"/>
</dbReference>
<dbReference type="InterPro" id="IPR036770">
    <property type="entry name" value="Ankyrin_rpt-contain_sf"/>
</dbReference>
<dbReference type="InterPro" id="IPR001611">
    <property type="entry name" value="Leu-rich_rpt"/>
</dbReference>
<dbReference type="InterPro" id="IPR032675">
    <property type="entry name" value="LRR_dom_sf"/>
</dbReference>
<dbReference type="InterPro" id="IPR052311">
    <property type="entry name" value="MMS22L-TONSL_complex_comp"/>
</dbReference>
<dbReference type="InterPro" id="IPR011990">
    <property type="entry name" value="TPR-like_helical_dom_sf"/>
</dbReference>
<dbReference type="InterPro" id="IPR019734">
    <property type="entry name" value="TPR_rpt"/>
</dbReference>
<dbReference type="PANTHER" id="PTHR46358">
    <property type="entry name" value="TONSOKU-LIKE PROTEIN"/>
    <property type="match status" value="1"/>
</dbReference>
<dbReference type="PANTHER" id="PTHR46358:SF1">
    <property type="entry name" value="TONSOKU-LIKE PROTEIN"/>
    <property type="match status" value="1"/>
</dbReference>
<dbReference type="Pfam" id="PF12796">
    <property type="entry name" value="Ank_2"/>
    <property type="match status" value="1"/>
</dbReference>
<dbReference type="Pfam" id="PF13516">
    <property type="entry name" value="LRR_6"/>
    <property type="match status" value="2"/>
</dbReference>
<dbReference type="Pfam" id="PF13181">
    <property type="entry name" value="TPR_8"/>
    <property type="match status" value="1"/>
</dbReference>
<dbReference type="PRINTS" id="PR01415">
    <property type="entry name" value="ANKYRIN"/>
</dbReference>
<dbReference type="SMART" id="SM00248">
    <property type="entry name" value="ANK"/>
    <property type="match status" value="3"/>
</dbReference>
<dbReference type="SMART" id="SM00368">
    <property type="entry name" value="LRR_RI"/>
    <property type="match status" value="2"/>
</dbReference>
<dbReference type="SMART" id="SM00028">
    <property type="entry name" value="TPR"/>
    <property type="match status" value="6"/>
</dbReference>
<dbReference type="SUPFAM" id="SSF48403">
    <property type="entry name" value="Ankyrin repeat"/>
    <property type="match status" value="1"/>
</dbReference>
<dbReference type="SUPFAM" id="SSF52047">
    <property type="entry name" value="RNI-like"/>
    <property type="match status" value="1"/>
</dbReference>
<dbReference type="SUPFAM" id="SSF48452">
    <property type="entry name" value="TPR-like"/>
    <property type="match status" value="2"/>
</dbReference>
<dbReference type="PROSITE" id="PS50297">
    <property type="entry name" value="ANK_REP_REGION"/>
    <property type="match status" value="1"/>
</dbReference>
<dbReference type="PROSITE" id="PS50088">
    <property type="entry name" value="ANK_REPEAT"/>
    <property type="match status" value="3"/>
</dbReference>
<dbReference type="PROSITE" id="PS50005">
    <property type="entry name" value="TPR"/>
    <property type="match status" value="6"/>
</dbReference>
<dbReference type="PROSITE" id="PS50293">
    <property type="entry name" value="TPR_REGION"/>
    <property type="match status" value="3"/>
</dbReference>
<proteinExistence type="evidence at protein level"/>